<evidence type="ECO:0000255" key="1">
    <source>
        <dbReference type="HAMAP-Rule" id="MF_00198"/>
    </source>
</evidence>
<reference key="1">
    <citation type="journal article" date="2001" name="J. Bacteriol.">
        <title>Genome sequence and comparative analysis of the solvent-producing bacterium Clostridium acetobutylicum.</title>
        <authorList>
            <person name="Noelling J."/>
            <person name="Breton G."/>
            <person name="Omelchenko M.V."/>
            <person name="Makarova K.S."/>
            <person name="Zeng Q."/>
            <person name="Gibson R."/>
            <person name="Lee H.M."/>
            <person name="Dubois J."/>
            <person name="Qiu D."/>
            <person name="Hitti J."/>
            <person name="Wolf Y.I."/>
            <person name="Tatusov R.L."/>
            <person name="Sabathe F."/>
            <person name="Doucette-Stamm L.A."/>
            <person name="Soucaille P."/>
            <person name="Daly M.J."/>
            <person name="Bennett G.N."/>
            <person name="Koonin E.V."/>
            <person name="Smith D.R."/>
        </authorList>
    </citation>
    <scope>NUCLEOTIDE SEQUENCE [LARGE SCALE GENOMIC DNA]</scope>
    <source>
        <strain>ATCC 824 / DSM 792 / JCM 1419 / IAM 19013 / LMG 5710 / NBRC 13948 / NRRL B-527 / VKM B-1787 / 2291 / W</strain>
    </source>
</reference>
<comment type="function">
    <text evidence="1">Catalyzes the irreversible transfer of a propylamine group from the amino donor S-adenosylmethioninamine (decarboxy-AdoMet) to putrescine (1,4-diaminobutane) to yield spermidine.</text>
</comment>
<comment type="catalytic activity">
    <reaction evidence="1">
        <text>S-adenosyl 3-(methylsulfanyl)propylamine + putrescine = S-methyl-5'-thioadenosine + spermidine + H(+)</text>
        <dbReference type="Rhea" id="RHEA:12721"/>
        <dbReference type="ChEBI" id="CHEBI:15378"/>
        <dbReference type="ChEBI" id="CHEBI:17509"/>
        <dbReference type="ChEBI" id="CHEBI:57443"/>
        <dbReference type="ChEBI" id="CHEBI:57834"/>
        <dbReference type="ChEBI" id="CHEBI:326268"/>
        <dbReference type="EC" id="2.5.1.16"/>
    </reaction>
</comment>
<comment type="pathway">
    <text evidence="1">Amine and polyamine biosynthesis; spermidine biosynthesis; spermidine from putrescine: step 1/1.</text>
</comment>
<comment type="subunit">
    <text evidence="1">Homodimer or homotetramer.</text>
</comment>
<comment type="subcellular location">
    <subcellularLocation>
        <location evidence="1">Cytoplasm</location>
    </subcellularLocation>
</comment>
<comment type="similarity">
    <text evidence="1">Belongs to the spermidine/spermine synthase family.</text>
</comment>
<organism>
    <name type="scientific">Clostridium acetobutylicum (strain ATCC 824 / DSM 792 / JCM 1419 / IAM 19013 / LMG 5710 / NBRC 13948 / NRRL B-527 / VKM B-1787 / 2291 / W)</name>
    <dbReference type="NCBI Taxonomy" id="272562"/>
    <lineage>
        <taxon>Bacteria</taxon>
        <taxon>Bacillati</taxon>
        <taxon>Bacillota</taxon>
        <taxon>Clostridia</taxon>
        <taxon>Eubacteriales</taxon>
        <taxon>Clostridiaceae</taxon>
        <taxon>Clostridium</taxon>
    </lineage>
</organism>
<feature type="chain" id="PRO_0000156475" description="Polyamine aminopropyltransferase">
    <location>
        <begin position="1"/>
        <end position="286"/>
    </location>
</feature>
<feature type="domain" description="PABS" evidence="1">
    <location>
        <begin position="3"/>
        <end position="240"/>
    </location>
</feature>
<feature type="active site" description="Proton acceptor" evidence="1">
    <location>
        <position position="158"/>
    </location>
</feature>
<feature type="binding site" evidence="1">
    <location>
        <position position="32"/>
    </location>
    <ligand>
        <name>S-methyl-5'-thioadenosine</name>
        <dbReference type="ChEBI" id="CHEBI:17509"/>
    </ligand>
</feature>
<feature type="binding site" evidence="1">
    <location>
        <position position="63"/>
    </location>
    <ligand>
        <name>spermidine</name>
        <dbReference type="ChEBI" id="CHEBI:57834"/>
    </ligand>
</feature>
<feature type="binding site" evidence="1">
    <location>
        <position position="87"/>
    </location>
    <ligand>
        <name>spermidine</name>
        <dbReference type="ChEBI" id="CHEBI:57834"/>
    </ligand>
</feature>
<feature type="binding site" evidence="1">
    <location>
        <position position="107"/>
    </location>
    <ligand>
        <name>S-methyl-5'-thioadenosine</name>
        <dbReference type="ChEBI" id="CHEBI:17509"/>
    </ligand>
</feature>
<feature type="binding site" evidence="1">
    <location>
        <begin position="139"/>
        <end position="140"/>
    </location>
    <ligand>
        <name>S-methyl-5'-thioadenosine</name>
        <dbReference type="ChEBI" id="CHEBI:17509"/>
    </ligand>
</feature>
<feature type="binding site" evidence="1">
    <location>
        <begin position="158"/>
        <end position="161"/>
    </location>
    <ligand>
        <name>spermidine</name>
        <dbReference type="ChEBI" id="CHEBI:57834"/>
    </ligand>
</feature>
<feature type="binding site" evidence="1">
    <location>
        <position position="165"/>
    </location>
    <ligand>
        <name>S-methyl-5'-thioadenosine</name>
        <dbReference type="ChEBI" id="CHEBI:17509"/>
    </ligand>
</feature>
<name>SPEE_CLOAB</name>
<dbReference type="EC" id="2.5.1.16" evidence="1"/>
<dbReference type="EMBL" id="AE001437">
    <property type="protein sequence ID" value="AAK80550.1"/>
    <property type="molecule type" value="Genomic_DNA"/>
</dbReference>
<dbReference type="PIR" id="C97220">
    <property type="entry name" value="C97220"/>
</dbReference>
<dbReference type="RefSeq" id="NP_349210.1">
    <property type="nucleotide sequence ID" value="NC_003030.1"/>
</dbReference>
<dbReference type="RefSeq" id="WP_010965891.1">
    <property type="nucleotide sequence ID" value="NC_003030.1"/>
</dbReference>
<dbReference type="SMR" id="Q97FX3"/>
<dbReference type="STRING" id="272562.CA_C2602"/>
<dbReference type="GeneID" id="44999071"/>
<dbReference type="KEGG" id="cac:CA_C2602"/>
<dbReference type="PATRIC" id="fig|272562.8.peg.2791"/>
<dbReference type="eggNOG" id="COG0421">
    <property type="taxonomic scope" value="Bacteria"/>
</dbReference>
<dbReference type="HOGENOM" id="CLU_048199_0_0_9"/>
<dbReference type="OrthoDB" id="9793120at2"/>
<dbReference type="UniPathway" id="UPA00248">
    <property type="reaction ID" value="UER00314"/>
</dbReference>
<dbReference type="Proteomes" id="UP000000814">
    <property type="component" value="Chromosome"/>
</dbReference>
<dbReference type="GO" id="GO:0005829">
    <property type="term" value="C:cytosol"/>
    <property type="evidence" value="ECO:0007669"/>
    <property type="project" value="TreeGrafter"/>
</dbReference>
<dbReference type="GO" id="GO:0004766">
    <property type="term" value="F:spermidine synthase activity"/>
    <property type="evidence" value="ECO:0007669"/>
    <property type="project" value="UniProtKB-UniRule"/>
</dbReference>
<dbReference type="GO" id="GO:0008295">
    <property type="term" value="P:spermidine biosynthetic process"/>
    <property type="evidence" value="ECO:0007669"/>
    <property type="project" value="UniProtKB-UniRule"/>
</dbReference>
<dbReference type="CDD" id="cd02440">
    <property type="entry name" value="AdoMet_MTases"/>
    <property type="match status" value="1"/>
</dbReference>
<dbReference type="Gene3D" id="2.30.140.10">
    <property type="entry name" value="Spermidine synthase, tetramerisation domain"/>
    <property type="match status" value="1"/>
</dbReference>
<dbReference type="Gene3D" id="3.40.50.150">
    <property type="entry name" value="Vaccinia Virus protein VP39"/>
    <property type="match status" value="1"/>
</dbReference>
<dbReference type="HAMAP" id="MF_00198">
    <property type="entry name" value="Spermidine_synth"/>
    <property type="match status" value="1"/>
</dbReference>
<dbReference type="InterPro" id="IPR030374">
    <property type="entry name" value="PABS"/>
</dbReference>
<dbReference type="InterPro" id="IPR029063">
    <property type="entry name" value="SAM-dependent_MTases_sf"/>
</dbReference>
<dbReference type="InterPro" id="IPR001045">
    <property type="entry name" value="Spermi_synthase"/>
</dbReference>
<dbReference type="InterPro" id="IPR035246">
    <property type="entry name" value="Spermidine_synt_N"/>
</dbReference>
<dbReference type="InterPro" id="IPR037163">
    <property type="entry name" value="Spermidine_synt_N_sf"/>
</dbReference>
<dbReference type="NCBIfam" id="NF002010">
    <property type="entry name" value="PRK00811.1"/>
    <property type="match status" value="1"/>
</dbReference>
<dbReference type="NCBIfam" id="TIGR00417">
    <property type="entry name" value="speE"/>
    <property type="match status" value="1"/>
</dbReference>
<dbReference type="PANTHER" id="PTHR11558:SF11">
    <property type="entry name" value="SPERMIDINE SYNTHASE"/>
    <property type="match status" value="1"/>
</dbReference>
<dbReference type="PANTHER" id="PTHR11558">
    <property type="entry name" value="SPERMIDINE/SPERMINE SYNTHASE"/>
    <property type="match status" value="1"/>
</dbReference>
<dbReference type="Pfam" id="PF17284">
    <property type="entry name" value="Spermine_synt_N"/>
    <property type="match status" value="1"/>
</dbReference>
<dbReference type="Pfam" id="PF01564">
    <property type="entry name" value="Spermine_synth"/>
    <property type="match status" value="1"/>
</dbReference>
<dbReference type="SUPFAM" id="SSF53335">
    <property type="entry name" value="S-adenosyl-L-methionine-dependent methyltransferases"/>
    <property type="match status" value="1"/>
</dbReference>
<dbReference type="PROSITE" id="PS51006">
    <property type="entry name" value="PABS_2"/>
    <property type="match status" value="1"/>
</dbReference>
<keyword id="KW-0963">Cytoplasm</keyword>
<keyword id="KW-0620">Polyamine biosynthesis</keyword>
<keyword id="KW-1185">Reference proteome</keyword>
<keyword id="KW-0745">Spermidine biosynthesis</keyword>
<keyword id="KW-0808">Transferase</keyword>
<gene>
    <name evidence="1" type="primary">speE</name>
    <name type="ordered locus">CA_C2602</name>
</gene>
<sequence>MLDLWYSESHADDTKFSIRVKEHLYSEKTPFQQIDFFKSETFGTFFTLDGYIMMTEKDEFIYHEMITHVPMAVNPKIKKVLIVGGGDGGTSREILRYNTIEKVDMVEIDERVVRLCQKYLTQTSCKLDNDSRLTMHFEDGKEFVKRAETGFYDLILVDSTDPIGPGEGLFTNEFYRDCERILSDDGILINQHESPYYKDYCHEMKRAHSKIKDKFPISMVYQFHMPTYASGHWLFGFASKKYHPLNNLNADSWNSLGLKTKYYNTNLHKGAFALPNYVIDELEKTE</sequence>
<proteinExistence type="inferred from homology"/>
<accession>Q97FX3</accession>
<protein>
    <recommendedName>
        <fullName evidence="1">Polyamine aminopropyltransferase</fullName>
    </recommendedName>
    <alternativeName>
        <fullName evidence="1">Putrescine aminopropyltransferase</fullName>
        <shortName evidence="1">PAPT</shortName>
    </alternativeName>
    <alternativeName>
        <fullName evidence="1">Spermidine synthase</fullName>
        <shortName evidence="1">SPDS</shortName>
        <shortName evidence="1">SPDSY</shortName>
        <ecNumber evidence="1">2.5.1.16</ecNumber>
    </alternativeName>
</protein>